<proteinExistence type="inferred from homology"/>
<protein>
    <recommendedName>
        <fullName evidence="1">Thymidine kinase</fullName>
        <ecNumber evidence="1">2.7.1.21</ecNumber>
    </recommendedName>
</protein>
<keyword id="KW-0067">ATP-binding</keyword>
<keyword id="KW-0963">Cytoplasm</keyword>
<keyword id="KW-0237">DNA synthesis</keyword>
<keyword id="KW-0418">Kinase</keyword>
<keyword id="KW-0479">Metal-binding</keyword>
<keyword id="KW-0547">Nucleotide-binding</keyword>
<keyword id="KW-1185">Reference proteome</keyword>
<keyword id="KW-0808">Transferase</keyword>
<keyword id="KW-0862">Zinc</keyword>
<organism>
    <name type="scientific">Streptococcus pyogenes serotype M1</name>
    <dbReference type="NCBI Taxonomy" id="301447"/>
    <lineage>
        <taxon>Bacteria</taxon>
        <taxon>Bacillati</taxon>
        <taxon>Bacillota</taxon>
        <taxon>Bacilli</taxon>
        <taxon>Lactobacillales</taxon>
        <taxon>Streptococcaceae</taxon>
        <taxon>Streptococcus</taxon>
    </lineage>
</organism>
<sequence>MAQLYYKYGTMNSGKTIEILKVAHNYEEQGKPVVIMTSALDTRDGFGIVSSRIGMRREAIPISNDMDIFTFIAQLEEKPYCVLIDESQFLSKQNVYDLARVVDELNVPVMAFGLKNDFQNNLFEGSKHLLLLADKIDEIKTICQYCSKKATMVLRTENGKPVYEGDQIQIGGNETYIPVCRKHYFNPDI</sequence>
<comment type="catalytic activity">
    <reaction evidence="1">
        <text>thymidine + ATP = dTMP + ADP + H(+)</text>
        <dbReference type="Rhea" id="RHEA:19129"/>
        <dbReference type="ChEBI" id="CHEBI:15378"/>
        <dbReference type="ChEBI" id="CHEBI:17748"/>
        <dbReference type="ChEBI" id="CHEBI:30616"/>
        <dbReference type="ChEBI" id="CHEBI:63528"/>
        <dbReference type="ChEBI" id="CHEBI:456216"/>
        <dbReference type="EC" id="2.7.1.21"/>
    </reaction>
</comment>
<comment type="subunit">
    <text evidence="1">Homotetramer.</text>
</comment>
<comment type="subcellular location">
    <subcellularLocation>
        <location evidence="1">Cytoplasm</location>
    </subcellularLocation>
</comment>
<comment type="similarity">
    <text evidence="1">Belongs to the thymidine kinase family.</text>
</comment>
<evidence type="ECO:0000255" key="1">
    <source>
        <dbReference type="HAMAP-Rule" id="MF_00124"/>
    </source>
</evidence>
<accession>Q99ZP6</accession>
<accession>Q48YU2</accession>
<name>KITH_STRP1</name>
<gene>
    <name evidence="1" type="primary">tdk</name>
    <name type="ordered locus">SPy_1140</name>
    <name type="ordered locus">M5005_Spy0862</name>
</gene>
<reference key="1">
    <citation type="journal article" date="2001" name="Proc. Natl. Acad. Sci. U.S.A.">
        <title>Complete genome sequence of an M1 strain of Streptococcus pyogenes.</title>
        <authorList>
            <person name="Ferretti J.J."/>
            <person name="McShan W.M."/>
            <person name="Ajdic D.J."/>
            <person name="Savic D.J."/>
            <person name="Savic G."/>
            <person name="Lyon K."/>
            <person name="Primeaux C."/>
            <person name="Sezate S."/>
            <person name="Suvorov A.N."/>
            <person name="Kenton S."/>
            <person name="Lai H.S."/>
            <person name="Lin S.P."/>
            <person name="Qian Y."/>
            <person name="Jia H.G."/>
            <person name="Najar F.Z."/>
            <person name="Ren Q."/>
            <person name="Zhu H."/>
            <person name="Song L."/>
            <person name="White J."/>
            <person name="Yuan X."/>
            <person name="Clifton S.W."/>
            <person name="Roe B.A."/>
            <person name="McLaughlin R.E."/>
        </authorList>
    </citation>
    <scope>NUCLEOTIDE SEQUENCE [LARGE SCALE GENOMIC DNA]</scope>
    <source>
        <strain>ATCC 700294 / SF370 / Serotype M1</strain>
    </source>
</reference>
<reference key="2">
    <citation type="journal article" date="2005" name="J. Infect. Dis.">
        <title>Evolutionary origin and emergence of a highly successful clone of serotype M1 group A Streptococcus involved multiple horizontal gene transfer events.</title>
        <authorList>
            <person name="Sumby P."/>
            <person name="Porcella S.F."/>
            <person name="Madrigal A.G."/>
            <person name="Barbian K.D."/>
            <person name="Virtaneva K."/>
            <person name="Ricklefs S.M."/>
            <person name="Sturdevant D.E."/>
            <person name="Graham M.R."/>
            <person name="Vuopio-Varkila J."/>
            <person name="Hoe N.P."/>
            <person name="Musser J.M."/>
        </authorList>
    </citation>
    <scope>NUCLEOTIDE SEQUENCE [LARGE SCALE GENOMIC DNA]</scope>
    <source>
        <strain>ATCC BAA-947 / MGAS5005 / Serotype M1</strain>
    </source>
</reference>
<feature type="chain" id="PRO_0000175034" description="Thymidine kinase">
    <location>
        <begin position="1"/>
        <end position="189"/>
    </location>
</feature>
<feature type="active site" description="Proton acceptor" evidence="1">
    <location>
        <position position="86"/>
    </location>
</feature>
<feature type="binding site" evidence="1">
    <location>
        <begin position="9"/>
        <end position="16"/>
    </location>
    <ligand>
        <name>ATP</name>
        <dbReference type="ChEBI" id="CHEBI:30616"/>
    </ligand>
</feature>
<feature type="binding site" evidence="1">
    <location>
        <begin position="85"/>
        <end position="88"/>
    </location>
    <ligand>
        <name>ATP</name>
        <dbReference type="ChEBI" id="CHEBI:30616"/>
    </ligand>
</feature>
<feature type="binding site" evidence="1">
    <location>
        <position position="143"/>
    </location>
    <ligand>
        <name>Zn(2+)</name>
        <dbReference type="ChEBI" id="CHEBI:29105"/>
    </ligand>
</feature>
<feature type="binding site" evidence="1">
    <location>
        <position position="146"/>
    </location>
    <ligand>
        <name>Zn(2+)</name>
        <dbReference type="ChEBI" id="CHEBI:29105"/>
    </ligand>
</feature>
<feature type="binding site" evidence="1">
    <location>
        <position position="180"/>
    </location>
    <ligand>
        <name>Zn(2+)</name>
        <dbReference type="ChEBI" id="CHEBI:29105"/>
    </ligand>
</feature>
<feature type="binding site" evidence="1">
    <location>
        <position position="183"/>
    </location>
    <ligand>
        <name>Zn(2+)</name>
        <dbReference type="ChEBI" id="CHEBI:29105"/>
    </ligand>
</feature>
<dbReference type="EC" id="2.7.1.21" evidence="1"/>
<dbReference type="EMBL" id="AE004092">
    <property type="protein sequence ID" value="AAK34012.1"/>
    <property type="molecule type" value="Genomic_DNA"/>
</dbReference>
<dbReference type="EMBL" id="CP000017">
    <property type="protein sequence ID" value="AAZ51480.1"/>
    <property type="molecule type" value="Genomic_DNA"/>
</dbReference>
<dbReference type="RefSeq" id="NP_269291.1">
    <property type="nucleotide sequence ID" value="NC_002737.2"/>
</dbReference>
<dbReference type="SMR" id="Q99ZP6"/>
<dbReference type="PaxDb" id="1314-HKU360_00924"/>
<dbReference type="KEGG" id="spy:SPy_1140"/>
<dbReference type="KEGG" id="spz:M5005_Spy0862"/>
<dbReference type="PATRIC" id="fig|160490.10.peg.993"/>
<dbReference type="HOGENOM" id="CLU_064400_2_2_9"/>
<dbReference type="OMA" id="GTMDCGK"/>
<dbReference type="Proteomes" id="UP000000750">
    <property type="component" value="Chromosome"/>
</dbReference>
<dbReference type="GO" id="GO:0005829">
    <property type="term" value="C:cytosol"/>
    <property type="evidence" value="ECO:0007669"/>
    <property type="project" value="TreeGrafter"/>
</dbReference>
<dbReference type="GO" id="GO:0005524">
    <property type="term" value="F:ATP binding"/>
    <property type="evidence" value="ECO:0007669"/>
    <property type="project" value="UniProtKB-UniRule"/>
</dbReference>
<dbReference type="GO" id="GO:0004797">
    <property type="term" value="F:thymidine kinase activity"/>
    <property type="evidence" value="ECO:0007669"/>
    <property type="project" value="UniProtKB-UniRule"/>
</dbReference>
<dbReference type="GO" id="GO:0008270">
    <property type="term" value="F:zinc ion binding"/>
    <property type="evidence" value="ECO:0007669"/>
    <property type="project" value="UniProtKB-UniRule"/>
</dbReference>
<dbReference type="GO" id="GO:0071897">
    <property type="term" value="P:DNA biosynthetic process"/>
    <property type="evidence" value="ECO:0007669"/>
    <property type="project" value="UniProtKB-KW"/>
</dbReference>
<dbReference type="GO" id="GO:0046104">
    <property type="term" value="P:thymidine metabolic process"/>
    <property type="evidence" value="ECO:0007669"/>
    <property type="project" value="TreeGrafter"/>
</dbReference>
<dbReference type="Gene3D" id="3.30.60.20">
    <property type="match status" value="1"/>
</dbReference>
<dbReference type="Gene3D" id="3.40.50.300">
    <property type="entry name" value="P-loop containing nucleotide triphosphate hydrolases"/>
    <property type="match status" value="1"/>
</dbReference>
<dbReference type="HAMAP" id="MF_00124">
    <property type="entry name" value="Thymidine_kinase"/>
    <property type="match status" value="1"/>
</dbReference>
<dbReference type="InterPro" id="IPR027417">
    <property type="entry name" value="P-loop_NTPase"/>
</dbReference>
<dbReference type="InterPro" id="IPR001267">
    <property type="entry name" value="Thymidine_kinase"/>
</dbReference>
<dbReference type="InterPro" id="IPR020633">
    <property type="entry name" value="Thymidine_kinase_CS"/>
</dbReference>
<dbReference type="NCBIfam" id="NF003299">
    <property type="entry name" value="PRK04296.1-4"/>
    <property type="match status" value="1"/>
</dbReference>
<dbReference type="NCBIfam" id="NF003300">
    <property type="entry name" value="PRK04296.1-5"/>
    <property type="match status" value="1"/>
</dbReference>
<dbReference type="PANTHER" id="PTHR11441">
    <property type="entry name" value="THYMIDINE KINASE"/>
    <property type="match status" value="1"/>
</dbReference>
<dbReference type="PANTHER" id="PTHR11441:SF0">
    <property type="entry name" value="THYMIDINE KINASE, CYTOSOLIC"/>
    <property type="match status" value="1"/>
</dbReference>
<dbReference type="Pfam" id="PF00265">
    <property type="entry name" value="TK"/>
    <property type="match status" value="1"/>
</dbReference>
<dbReference type="PIRSF" id="PIRSF035805">
    <property type="entry name" value="TK_cell"/>
    <property type="match status" value="1"/>
</dbReference>
<dbReference type="SUPFAM" id="SSF57716">
    <property type="entry name" value="Glucocorticoid receptor-like (DNA-binding domain)"/>
    <property type="match status" value="1"/>
</dbReference>
<dbReference type="SUPFAM" id="SSF52540">
    <property type="entry name" value="P-loop containing nucleoside triphosphate hydrolases"/>
    <property type="match status" value="1"/>
</dbReference>
<dbReference type="PROSITE" id="PS00603">
    <property type="entry name" value="TK_CELLULAR_TYPE"/>
    <property type="match status" value="1"/>
</dbReference>